<sequence length="515" mass="56345">MSGYTAFFNNFLGKSPNWYKLSIIVFLILNPILYFLISPFIAGWCLVIEFIFTLAMALKCYPLQPGGLLAFEAIAIGMTSPAHVKAEIMASFEVILLLMFMVAGIYFMKQLLLFAFTRLLITVRSKIVLSLSFCLSAAFLSAFLDALTVVAVIISVVMGFYGVYHKVASGNNFDDSTDITNDEKIKKDQQVLEQFRSFLRSLMMHAGVGTALGGVMTLVGEPQNLIIAEQASWGFGEFFIRMAPVTVPVLICGLITCVMIEKMNIFGYGDKLPRKVWGILAKFNRAQQQKMNRQERQKLIIQGIIGIWLVCGLAFHLAAVGLIGLSVIVLTTAFCGITSESTIGKSFQESLPFCALLVVFFSVVAVIIDQHLFGPIINYVLSASESTQLLLFYGFNGLLSAISDNVFVATVYINEAKNALHAGIISLEQFELLAVAINTGTNLPSVATPNGQAAFLFLLTSSLAPLIRLSYGKMVYMALPYTIVLTVVGLLAVEYILPGATKYFSSLGWITALPV</sequence>
<reference key="1">
    <citation type="journal article" date="2004" name="Nat. Biotechnol.">
        <title>The genome sequence of the capnophilic rumen bacterium Mannheimia succiniciproducens.</title>
        <authorList>
            <person name="Hong S.H."/>
            <person name="Kim J.S."/>
            <person name="Lee S.Y."/>
            <person name="In Y.H."/>
            <person name="Choi S.S."/>
            <person name="Rih J.-K."/>
            <person name="Kim C.H."/>
            <person name="Jeong H."/>
            <person name="Hur C.G."/>
            <person name="Kim J.J."/>
        </authorList>
    </citation>
    <scope>NUCLEOTIDE SEQUENCE [LARGE SCALE GENOMIC DNA]</scope>
    <source>
        <strain>KCTC 0769BP / MBEL55E</strain>
    </source>
</reference>
<proteinExistence type="inferred from homology"/>
<protein>
    <recommendedName>
        <fullName evidence="1">Na(+)/H(+) antiporter NhaB</fullName>
    </recommendedName>
    <alternativeName>
        <fullName evidence="1">Sodium/proton antiporter NhaB</fullName>
    </alternativeName>
</protein>
<accession>Q65VH3</accession>
<dbReference type="EMBL" id="AE016827">
    <property type="protein sequence ID" value="AAU37037.1"/>
    <property type="molecule type" value="Genomic_DNA"/>
</dbReference>
<dbReference type="RefSeq" id="WP_011199612.1">
    <property type="nucleotide sequence ID" value="NC_006300.1"/>
</dbReference>
<dbReference type="SMR" id="Q65VH3"/>
<dbReference type="STRING" id="221988.MS0430"/>
<dbReference type="KEGG" id="msu:MS0430"/>
<dbReference type="eggNOG" id="COG3067">
    <property type="taxonomic scope" value="Bacteria"/>
</dbReference>
<dbReference type="HOGENOM" id="CLU_041110_0_0_6"/>
<dbReference type="OrthoDB" id="5288732at2"/>
<dbReference type="Proteomes" id="UP000000607">
    <property type="component" value="Chromosome"/>
</dbReference>
<dbReference type="GO" id="GO:0005886">
    <property type="term" value="C:plasma membrane"/>
    <property type="evidence" value="ECO:0007669"/>
    <property type="project" value="UniProtKB-SubCell"/>
</dbReference>
<dbReference type="GO" id="GO:0015385">
    <property type="term" value="F:sodium:proton antiporter activity"/>
    <property type="evidence" value="ECO:0007669"/>
    <property type="project" value="InterPro"/>
</dbReference>
<dbReference type="HAMAP" id="MF_01599">
    <property type="entry name" value="NhaB"/>
    <property type="match status" value="1"/>
</dbReference>
<dbReference type="InterPro" id="IPR004671">
    <property type="entry name" value="Na+/H+_antiporter_NhaB"/>
</dbReference>
<dbReference type="NCBIfam" id="TIGR00774">
    <property type="entry name" value="NhaB"/>
    <property type="match status" value="1"/>
</dbReference>
<dbReference type="NCBIfam" id="NF007093">
    <property type="entry name" value="PRK09547.1"/>
    <property type="match status" value="1"/>
</dbReference>
<dbReference type="PANTHER" id="PTHR43302:SF1">
    <property type="entry name" value="NA(+)_H(+) ANTIPORTER NHAB"/>
    <property type="match status" value="1"/>
</dbReference>
<dbReference type="PANTHER" id="PTHR43302">
    <property type="entry name" value="TRANSPORTER ARSB-RELATED"/>
    <property type="match status" value="1"/>
</dbReference>
<dbReference type="Pfam" id="PF06450">
    <property type="entry name" value="NhaB"/>
    <property type="match status" value="1"/>
</dbReference>
<name>NHAB_MANSM</name>
<organism>
    <name type="scientific">Mannheimia succiniciproducens (strain KCTC 0769BP / MBEL55E)</name>
    <dbReference type="NCBI Taxonomy" id="221988"/>
    <lineage>
        <taxon>Bacteria</taxon>
        <taxon>Pseudomonadati</taxon>
        <taxon>Pseudomonadota</taxon>
        <taxon>Gammaproteobacteria</taxon>
        <taxon>Pasteurellales</taxon>
        <taxon>Pasteurellaceae</taxon>
        <taxon>Basfia</taxon>
    </lineage>
</organism>
<gene>
    <name evidence="1" type="primary">nhaB</name>
    <name type="ordered locus">MS0430</name>
</gene>
<feature type="chain" id="PRO_0000333099" description="Na(+)/H(+) antiporter NhaB">
    <location>
        <begin position="1"/>
        <end position="515"/>
    </location>
</feature>
<feature type="transmembrane region" description="Helical" evidence="1">
    <location>
        <begin position="23"/>
        <end position="43"/>
    </location>
</feature>
<feature type="transmembrane region" description="Helical" evidence="1">
    <location>
        <begin position="44"/>
        <end position="64"/>
    </location>
</feature>
<feature type="transmembrane region" description="Helical" evidence="1">
    <location>
        <begin position="88"/>
        <end position="108"/>
    </location>
</feature>
<feature type="transmembrane region" description="Helical" evidence="1">
    <location>
        <begin position="119"/>
        <end position="139"/>
    </location>
</feature>
<feature type="transmembrane region" description="Helical" evidence="1">
    <location>
        <begin position="143"/>
        <end position="163"/>
    </location>
</feature>
<feature type="transmembrane region" description="Helical" evidence="1">
    <location>
        <begin position="202"/>
        <end position="222"/>
    </location>
</feature>
<feature type="transmembrane region" description="Helical" evidence="1">
    <location>
        <begin position="238"/>
        <end position="258"/>
    </location>
</feature>
<feature type="transmembrane region" description="Helical" evidence="1">
    <location>
        <begin position="303"/>
        <end position="323"/>
    </location>
</feature>
<feature type="transmembrane region" description="Helical" evidence="1">
    <location>
        <begin position="324"/>
        <end position="344"/>
    </location>
</feature>
<feature type="transmembrane region" description="Helical" evidence="1">
    <location>
        <begin position="357"/>
        <end position="377"/>
    </location>
</feature>
<feature type="transmembrane region" description="Helical" evidence="1">
    <location>
        <begin position="389"/>
        <end position="409"/>
    </location>
</feature>
<feature type="transmembrane region" description="Helical" evidence="1">
    <location>
        <begin position="447"/>
        <end position="467"/>
    </location>
</feature>
<feature type="transmembrane region" description="Helical" evidence="1">
    <location>
        <begin position="477"/>
        <end position="497"/>
    </location>
</feature>
<comment type="function">
    <text evidence="1">Na(+)/H(+) antiporter that extrudes sodium in exchange for external protons.</text>
</comment>
<comment type="catalytic activity">
    <reaction evidence="1">
        <text>2 Na(+)(in) + 3 H(+)(out) = 2 Na(+)(out) + 3 H(+)(in)</text>
        <dbReference type="Rhea" id="RHEA:29247"/>
        <dbReference type="ChEBI" id="CHEBI:15378"/>
        <dbReference type="ChEBI" id="CHEBI:29101"/>
    </reaction>
    <physiologicalReaction direction="left-to-right" evidence="1">
        <dbReference type="Rhea" id="RHEA:29248"/>
    </physiologicalReaction>
</comment>
<comment type="subcellular location">
    <subcellularLocation>
        <location evidence="1">Cell inner membrane</location>
        <topology evidence="1">Multi-pass membrane protein</topology>
    </subcellularLocation>
</comment>
<comment type="similarity">
    <text evidence="1">Belongs to the NhaB Na(+)/H(+) (TC 2.A.34) antiporter family.</text>
</comment>
<evidence type="ECO:0000255" key="1">
    <source>
        <dbReference type="HAMAP-Rule" id="MF_01599"/>
    </source>
</evidence>
<keyword id="KW-0050">Antiport</keyword>
<keyword id="KW-0997">Cell inner membrane</keyword>
<keyword id="KW-1003">Cell membrane</keyword>
<keyword id="KW-0406">Ion transport</keyword>
<keyword id="KW-0472">Membrane</keyword>
<keyword id="KW-0915">Sodium</keyword>
<keyword id="KW-0739">Sodium transport</keyword>
<keyword id="KW-0812">Transmembrane</keyword>
<keyword id="KW-1133">Transmembrane helix</keyword>
<keyword id="KW-0813">Transport</keyword>